<organismHost>
    <name type="scientific">Homo sapiens</name>
    <name type="common">Human</name>
    <dbReference type="NCBI Taxonomy" id="9606"/>
</organismHost>
<name>VU94_HHV6Z</name>
<sequence length="490" mass="56031">MFSIINPSDDFWTKDKYIMLTIKGPVEWEAEIPGISTDFFCKFSNVPVPHFRDMHSPGAPDIKWITACTKMIDVILNYWNNKTAVPTPAKWYAQAENKAGRPSLTLLIALDGIPTATIGKHTTEIRGVLIKDFFDGNAPKIDDWCTYAKTKKNGGGTQVFSLSYIPFALLQIIRPQFQWAWTNINELGDVCDEIHRKHIISHFNKKPNVKLMLFPKDGTNRISLKSKFLGTIEWLSDLGIVTEDAWIRRDVRSYMQLLTLTHGDVLIHRALSISKKRIRATRKAIDFIAHIDTDFEIYENPVYQLFCLQSFDPILAGTILYQWLSHRRGKKNTVSFIGPPGCGKSMLTGAILENIPLHGILHGSLNTKNLRAYGQVLVLWWKDISINFENFNIIKSLLGGQKIIFPINENDHVQIGPCPIIATSCVDIRSMVHSNIHKINLSQRVYNFTFDKVIPRNFPVIQKDDINQFLFWARNRSINCFIDYTVPKIL</sequence>
<organism>
    <name type="scientific">Human herpesvirus 6B (strain Z29)</name>
    <name type="common">HHV-6 variant B</name>
    <name type="synonym">Human B lymphotropic virus</name>
    <dbReference type="NCBI Taxonomy" id="36351"/>
    <lineage>
        <taxon>Viruses</taxon>
        <taxon>Duplodnaviria</taxon>
        <taxon>Heunggongvirae</taxon>
        <taxon>Peploviricota</taxon>
        <taxon>Herviviricetes</taxon>
        <taxon>Herpesvirales</taxon>
        <taxon>Orthoherpesviridae</taxon>
        <taxon>Betaherpesvirinae</taxon>
        <taxon>Roseolovirus</taxon>
        <taxon>Roseolovirus humanbeta6b</taxon>
        <taxon>Human herpesvirus 6B</taxon>
    </lineage>
</organism>
<proteinExistence type="inferred from homology"/>
<accession>P0DTO3</accession>
<accession>Q77PU5</accession>
<accession>Q9WSZ6</accession>
<feature type="chain" id="PRO_0000408459" description="Protein U94">
    <location>
        <begin position="1"/>
        <end position="490"/>
    </location>
</feature>
<feature type="domain" description="PV NS1-Nuc" evidence="2">
    <location>
        <begin position="1"/>
        <end position="210"/>
    </location>
</feature>
<feature type="domain" description="SF3 helicase">
    <location>
        <begin position="312"/>
        <end position="463"/>
    </location>
</feature>
<feature type="binding site" evidence="1">
    <location>
        <begin position="338"/>
        <end position="345"/>
    </location>
    <ligand>
        <name>ATP</name>
        <dbReference type="ChEBI" id="CHEBI:30616"/>
    </ligand>
</feature>
<evidence type="ECO:0000255" key="1"/>
<evidence type="ECO:0000255" key="2">
    <source>
        <dbReference type="PROSITE-ProRule" id="PRU01366"/>
    </source>
</evidence>
<keyword id="KW-0067">ATP-binding</keyword>
<keyword id="KW-0235">DNA replication</keyword>
<keyword id="KW-0238">DNA-binding</keyword>
<keyword id="KW-1048">Host nucleus</keyword>
<keyword id="KW-0547">Nucleotide-binding</keyword>
<keyword id="KW-1185">Reference proteome</keyword>
<comment type="subcellular location">
    <subcellularLocation>
        <location evidence="2">Host nucleus</location>
    </subcellularLocation>
</comment>
<dbReference type="EMBL" id="AF157706">
    <property type="protein sequence ID" value="AAD49678.1"/>
    <property type="molecule type" value="Genomic_DNA"/>
</dbReference>
<dbReference type="RefSeq" id="NP_050269.1">
    <property type="nucleotide sequence ID" value="NC_000898.1"/>
</dbReference>
<dbReference type="SMR" id="P0DTO3"/>
<dbReference type="GeneID" id="1497090"/>
<dbReference type="KEGG" id="vg:1497090"/>
<dbReference type="Proteomes" id="UP000006930">
    <property type="component" value="Segment"/>
</dbReference>
<dbReference type="GO" id="GO:0042025">
    <property type="term" value="C:host cell nucleus"/>
    <property type="evidence" value="ECO:0007669"/>
    <property type="project" value="UniProtKB-SubCell"/>
</dbReference>
<dbReference type="GO" id="GO:0005524">
    <property type="term" value="F:ATP binding"/>
    <property type="evidence" value="ECO:0007669"/>
    <property type="project" value="UniProtKB-KW"/>
</dbReference>
<dbReference type="GO" id="GO:0003677">
    <property type="term" value="F:DNA binding"/>
    <property type="evidence" value="ECO:0007669"/>
    <property type="project" value="UniProtKB-KW"/>
</dbReference>
<dbReference type="GO" id="GO:0006260">
    <property type="term" value="P:DNA replication"/>
    <property type="evidence" value="ECO:0007669"/>
    <property type="project" value="UniProtKB-KW"/>
</dbReference>
<dbReference type="GO" id="GO:0019079">
    <property type="term" value="P:viral genome replication"/>
    <property type="evidence" value="ECO:0007669"/>
    <property type="project" value="InterPro"/>
</dbReference>
<dbReference type="Gene3D" id="3.40.1310.20">
    <property type="match status" value="1"/>
</dbReference>
<dbReference type="Gene3D" id="3.40.50.300">
    <property type="entry name" value="P-loop containing nucleotide triphosphate hydrolases"/>
    <property type="match status" value="1"/>
</dbReference>
<dbReference type="InterPro" id="IPR014835">
    <property type="entry name" value="NS1-Nuc"/>
</dbReference>
<dbReference type="InterPro" id="IPR027417">
    <property type="entry name" value="P-loop_NTPase"/>
</dbReference>
<dbReference type="InterPro" id="IPR001257">
    <property type="entry name" value="Parvovirus_NS1_helicase"/>
</dbReference>
<dbReference type="InterPro" id="IPR049901">
    <property type="entry name" value="PV_NS1-NUC"/>
</dbReference>
<dbReference type="Pfam" id="PF01057">
    <property type="entry name" value="Parvo_NS1"/>
    <property type="match status" value="1"/>
</dbReference>
<dbReference type="Pfam" id="PF08724">
    <property type="entry name" value="Rep_N"/>
    <property type="match status" value="1"/>
</dbReference>
<dbReference type="SUPFAM" id="SSF55464">
    <property type="entry name" value="Origin of replication-binding domain, RBD-like"/>
    <property type="match status" value="1"/>
</dbReference>
<dbReference type="SUPFAM" id="SSF52540">
    <property type="entry name" value="P-loop containing nucleoside triphosphate hydrolases"/>
    <property type="match status" value="1"/>
</dbReference>
<dbReference type="PROSITE" id="PS52022">
    <property type="entry name" value="PV_NS1_NUC"/>
    <property type="match status" value="1"/>
</dbReference>
<gene>
    <name type="primary">U94</name>
</gene>
<reference key="1">
    <citation type="journal article" date="1999" name="J. Virol.">
        <title>Human herpesvirus 6B genome sequence: coding content and comparison with human herpesvirus 6A.</title>
        <authorList>
            <person name="Dominguez G."/>
            <person name="Dambaugh T.R."/>
            <person name="Stamey F.R."/>
            <person name="Dewhurst S."/>
            <person name="Inoue N."/>
            <person name="Pellett P.E."/>
        </authorList>
    </citation>
    <scope>NUCLEOTIDE SEQUENCE [LARGE SCALE GENOMIC DNA]</scope>
</reference>
<protein>
    <recommendedName>
        <fullName>Protein U94</fullName>
    </recommendedName>
</protein>